<sequence>MSSSSKIDSEKPVMVSESLFSTKTPIKTVKRQIFSSSPKPESVIKLPERFEILEEFFNGLDTAIRLLKLKGSSTTYANICPKIEYLTNRIFSYDHLAQMKHIYPEAIELKRVLKFVEDTCCMKPRLHIKLNTDAIVVEDTICGTKYMELRKVFHSKLVDFRKAHPKDEIPKELLPEPFNSPQRDSYSGIVSVGLGEPKLEVGGFDVHMEEIEQEEQDVNKVIPDSTLSHIESRIVETPVKDLSTPSKDLSTPIRLMSATPTLQLSKRCIELTPEGGDDNSLRSTNSLARGPSRSLNFDTFEEDAIEKDDIGNESDDKGINYEEDGLLQSVKGPSRSLNFDTLEEETIVKDDISNESGDEKSNYEGDNASDDDSLLQSMIERPKTEPEKHNLPQLVNLIHRVFHSTNRTVITKEELLYKIIANQINITDRREVEEQLSLMLQLVPDWISETKASSGDLLVRINKMSTAETVRARLEEATSHDISLIY</sequence>
<comment type="function">
    <text evidence="3">Member of the pre-replication complex. Regulates endoreduplication. Involved in the coordination of cell and plastid division.</text>
</comment>
<comment type="interaction">
    <interactant intactId="EBI-8079764">
        <id>Q9M1S9</id>
    </interactant>
    <interactant intactId="EBI-541722">
        <id>B7U179</id>
        <label>ABAP1</label>
    </interactant>
    <organismsDiffer>false</organismsDiffer>
    <experiments>2</experiments>
</comment>
<comment type="subcellular location">
    <subcellularLocation>
        <location evidence="5">Nucleus</location>
    </subcellularLocation>
</comment>
<comment type="tissue specificity">
    <text evidence="2">Expressed in proliferating (e.g. shoot and root apical meristems, organ primordia, guard cells and stomatal lineage) and endoreplicating cells (e.g. developing trichomes).</text>
</comment>
<comment type="induction">
    <text evidence="4">Repressed by ABAP1.</text>
</comment>
<comment type="similarity">
    <text evidence="5">Belongs to the Cdt1 family.</text>
</comment>
<evidence type="ECO:0000256" key="1">
    <source>
        <dbReference type="SAM" id="MobiDB-lite"/>
    </source>
</evidence>
<evidence type="ECO:0000269" key="2">
    <source>
    </source>
</evidence>
<evidence type="ECO:0000269" key="3">
    <source>
    </source>
</evidence>
<evidence type="ECO:0000269" key="4">
    <source>
    </source>
</evidence>
<evidence type="ECO:0000305" key="5"/>
<keyword id="KW-0131">Cell cycle</keyword>
<keyword id="KW-0235">DNA replication</keyword>
<keyword id="KW-0539">Nucleus</keyword>
<keyword id="KW-1185">Reference proteome</keyword>
<organism>
    <name type="scientific">Arabidopsis thaliana</name>
    <name type="common">Mouse-ear cress</name>
    <dbReference type="NCBI Taxonomy" id="3702"/>
    <lineage>
        <taxon>Eukaryota</taxon>
        <taxon>Viridiplantae</taxon>
        <taxon>Streptophyta</taxon>
        <taxon>Embryophyta</taxon>
        <taxon>Tracheophyta</taxon>
        <taxon>Spermatophyta</taxon>
        <taxon>Magnoliopsida</taxon>
        <taxon>eudicotyledons</taxon>
        <taxon>Gunneridae</taxon>
        <taxon>Pentapetalae</taxon>
        <taxon>rosids</taxon>
        <taxon>malvids</taxon>
        <taxon>Brassicales</taxon>
        <taxon>Brassicaceae</taxon>
        <taxon>Camelineae</taxon>
        <taxon>Arabidopsis</taxon>
    </lineage>
</organism>
<name>CDT1B_ARATH</name>
<dbReference type="EMBL" id="AJ421409">
    <property type="protein sequence ID" value="CAD13173.1"/>
    <property type="molecule type" value="mRNA"/>
</dbReference>
<dbReference type="EMBL" id="AL138650">
    <property type="protein sequence ID" value="CAB77591.1"/>
    <property type="molecule type" value="Genomic_DNA"/>
</dbReference>
<dbReference type="EMBL" id="CP002686">
    <property type="protein sequence ID" value="AEE79269.1"/>
    <property type="molecule type" value="Genomic_DNA"/>
</dbReference>
<dbReference type="EMBL" id="BT029185">
    <property type="protein sequence ID" value="ABJ17120.1"/>
    <property type="molecule type" value="mRNA"/>
</dbReference>
<dbReference type="PIR" id="T47630">
    <property type="entry name" value="T47630"/>
</dbReference>
<dbReference type="RefSeq" id="NP_191031.1">
    <property type="nucleotide sequence ID" value="NM_115328.4"/>
</dbReference>
<dbReference type="SMR" id="Q9M1S9"/>
<dbReference type="BioGRID" id="9952">
    <property type="interactions" value="2"/>
</dbReference>
<dbReference type="FunCoup" id="Q9M1S9">
    <property type="interactions" value="21"/>
</dbReference>
<dbReference type="IntAct" id="Q9M1S9">
    <property type="interactions" value="3"/>
</dbReference>
<dbReference type="MINT" id="Q9M1S9"/>
<dbReference type="STRING" id="3702.Q9M1S9"/>
<dbReference type="iPTMnet" id="Q9M1S9"/>
<dbReference type="PaxDb" id="3702-AT3G54710.1"/>
<dbReference type="ProteomicsDB" id="220524"/>
<dbReference type="EnsemblPlants" id="AT3G54710.1">
    <property type="protein sequence ID" value="AT3G54710.1"/>
    <property type="gene ID" value="AT3G54710"/>
</dbReference>
<dbReference type="GeneID" id="824636"/>
<dbReference type="Gramene" id="AT3G54710.1">
    <property type="protein sequence ID" value="AT3G54710.1"/>
    <property type="gene ID" value="AT3G54710"/>
</dbReference>
<dbReference type="KEGG" id="ath:AT3G54710"/>
<dbReference type="Araport" id="AT3G54710"/>
<dbReference type="TAIR" id="AT3G54710">
    <property type="gene designation" value="CDT1B"/>
</dbReference>
<dbReference type="eggNOG" id="KOG4762">
    <property type="taxonomic scope" value="Eukaryota"/>
</dbReference>
<dbReference type="HOGENOM" id="CLU_019037_1_0_1"/>
<dbReference type="InParanoid" id="Q9M1S9"/>
<dbReference type="OMA" id="DTICGTK"/>
<dbReference type="PhylomeDB" id="Q9M1S9"/>
<dbReference type="PRO" id="PR:Q9M1S9"/>
<dbReference type="Proteomes" id="UP000006548">
    <property type="component" value="Chromosome 3"/>
</dbReference>
<dbReference type="ExpressionAtlas" id="Q9M1S9">
    <property type="expression patterns" value="baseline and differential"/>
</dbReference>
<dbReference type="GO" id="GO:0005634">
    <property type="term" value="C:nucleus"/>
    <property type="evidence" value="ECO:0007669"/>
    <property type="project" value="UniProtKB-SubCell"/>
</dbReference>
<dbReference type="GO" id="GO:0004693">
    <property type="term" value="F:cyclin-dependent protein serine/threonine kinase activity"/>
    <property type="evidence" value="ECO:0000250"/>
    <property type="project" value="TAIR"/>
</dbReference>
<dbReference type="GO" id="GO:0003677">
    <property type="term" value="F:DNA binding"/>
    <property type="evidence" value="ECO:0007669"/>
    <property type="project" value="InterPro"/>
</dbReference>
<dbReference type="GO" id="GO:0070182">
    <property type="term" value="F:DNA polymerase binding"/>
    <property type="evidence" value="ECO:0000353"/>
    <property type="project" value="TAIR"/>
</dbReference>
<dbReference type="GO" id="GO:0009658">
    <property type="term" value="P:chloroplast organization"/>
    <property type="evidence" value="ECO:0000315"/>
    <property type="project" value="TAIR"/>
</dbReference>
<dbReference type="GO" id="GO:0051276">
    <property type="term" value="P:chromosome organization"/>
    <property type="evidence" value="ECO:0000315"/>
    <property type="project" value="TAIR"/>
</dbReference>
<dbReference type="GO" id="GO:0006260">
    <property type="term" value="P:DNA replication"/>
    <property type="evidence" value="ECO:0000315"/>
    <property type="project" value="TAIR"/>
</dbReference>
<dbReference type="GO" id="GO:0071163">
    <property type="term" value="P:DNA replication preinitiation complex assembly"/>
    <property type="evidence" value="ECO:0007669"/>
    <property type="project" value="InterPro"/>
</dbReference>
<dbReference type="GO" id="GO:0048229">
    <property type="term" value="P:gametophyte development"/>
    <property type="evidence" value="ECO:0000315"/>
    <property type="project" value="TAIR"/>
</dbReference>
<dbReference type="GO" id="GO:0030174">
    <property type="term" value="P:regulation of DNA-templated DNA replication initiation"/>
    <property type="evidence" value="ECO:0007669"/>
    <property type="project" value="InterPro"/>
</dbReference>
<dbReference type="CDD" id="cd08767">
    <property type="entry name" value="Cdt1_c"/>
    <property type="match status" value="1"/>
</dbReference>
<dbReference type="CDD" id="cd08674">
    <property type="entry name" value="Cdt1_m"/>
    <property type="match status" value="1"/>
</dbReference>
<dbReference type="FunFam" id="1.10.10.1420:FF:000002">
    <property type="entry name" value="CDT1-like protein a chloroplastic"/>
    <property type="match status" value="1"/>
</dbReference>
<dbReference type="Gene3D" id="1.10.10.1420">
    <property type="entry name" value="DNA replication factor Cdt1, C-terminal WH domain"/>
    <property type="match status" value="1"/>
</dbReference>
<dbReference type="InterPro" id="IPR045173">
    <property type="entry name" value="Cdt1"/>
</dbReference>
<dbReference type="InterPro" id="IPR032054">
    <property type="entry name" value="Cdt1_C"/>
</dbReference>
<dbReference type="InterPro" id="IPR038090">
    <property type="entry name" value="Cdt1_C_WH_dom_sf"/>
</dbReference>
<dbReference type="InterPro" id="IPR014939">
    <property type="entry name" value="CDT1_Gemini-bd-like"/>
</dbReference>
<dbReference type="InterPro" id="IPR036390">
    <property type="entry name" value="WH_DNA-bd_sf"/>
</dbReference>
<dbReference type="PANTHER" id="PTHR28637:SF10">
    <property type="entry name" value="CDT1-LIKE PROTEIN B"/>
    <property type="match status" value="1"/>
</dbReference>
<dbReference type="PANTHER" id="PTHR28637">
    <property type="entry name" value="DNA REPLICATION FACTOR CDT1"/>
    <property type="match status" value="1"/>
</dbReference>
<dbReference type="Pfam" id="PF08839">
    <property type="entry name" value="CDT1"/>
    <property type="match status" value="1"/>
</dbReference>
<dbReference type="Pfam" id="PF16679">
    <property type="entry name" value="CDT1_C"/>
    <property type="match status" value="1"/>
</dbReference>
<dbReference type="SMART" id="SM01075">
    <property type="entry name" value="CDT1"/>
    <property type="match status" value="1"/>
</dbReference>
<dbReference type="SUPFAM" id="SSF46785">
    <property type="entry name" value="Winged helix' DNA-binding domain"/>
    <property type="match status" value="1"/>
</dbReference>
<gene>
    <name type="primary">CDT1B</name>
    <name type="ordered locus">At3g54710</name>
    <name type="ORF">T5N23.70</name>
</gene>
<reference key="1">
    <citation type="journal article" date="2004" name="Plant Cell">
        <title>DNA replication licensing affects cell proliferation or endoreplication in a cell type-specific manner.</title>
        <authorList>
            <person name="del Mar Castellano M."/>
            <person name="Boniotti M.B."/>
            <person name="Caro E."/>
            <person name="Schnittger A."/>
            <person name="Gutierrez C."/>
        </authorList>
    </citation>
    <scope>NUCLEOTIDE SEQUENCE [MRNA]</scope>
    <scope>TISSUE SPECIFICITY</scope>
    <source>
        <strain>cv. Columbia</strain>
    </source>
</reference>
<reference key="2">
    <citation type="journal article" date="2000" name="Nature">
        <title>Sequence and analysis of chromosome 3 of the plant Arabidopsis thaliana.</title>
        <authorList>
            <person name="Salanoubat M."/>
            <person name="Lemcke K."/>
            <person name="Rieger M."/>
            <person name="Ansorge W."/>
            <person name="Unseld M."/>
            <person name="Fartmann B."/>
            <person name="Valle G."/>
            <person name="Bloecker H."/>
            <person name="Perez-Alonso M."/>
            <person name="Obermaier B."/>
            <person name="Delseny M."/>
            <person name="Boutry M."/>
            <person name="Grivell L.A."/>
            <person name="Mache R."/>
            <person name="Puigdomenech P."/>
            <person name="De Simone V."/>
            <person name="Choisne N."/>
            <person name="Artiguenave F."/>
            <person name="Robert C."/>
            <person name="Brottier P."/>
            <person name="Wincker P."/>
            <person name="Cattolico L."/>
            <person name="Weissenbach J."/>
            <person name="Saurin W."/>
            <person name="Quetier F."/>
            <person name="Schaefer M."/>
            <person name="Mueller-Auer S."/>
            <person name="Gabel C."/>
            <person name="Fuchs M."/>
            <person name="Benes V."/>
            <person name="Wurmbach E."/>
            <person name="Drzonek H."/>
            <person name="Erfle H."/>
            <person name="Jordan N."/>
            <person name="Bangert S."/>
            <person name="Wiedelmann R."/>
            <person name="Kranz H."/>
            <person name="Voss H."/>
            <person name="Holland R."/>
            <person name="Brandt P."/>
            <person name="Nyakatura G."/>
            <person name="Vezzi A."/>
            <person name="D'Angelo M."/>
            <person name="Pallavicini A."/>
            <person name="Toppo S."/>
            <person name="Simionati B."/>
            <person name="Conrad A."/>
            <person name="Hornischer K."/>
            <person name="Kauer G."/>
            <person name="Loehnert T.-H."/>
            <person name="Nordsiek G."/>
            <person name="Reichelt J."/>
            <person name="Scharfe M."/>
            <person name="Schoen O."/>
            <person name="Bargues M."/>
            <person name="Terol J."/>
            <person name="Climent J."/>
            <person name="Navarro P."/>
            <person name="Collado C."/>
            <person name="Perez-Perez A."/>
            <person name="Ottenwaelder B."/>
            <person name="Duchemin D."/>
            <person name="Cooke R."/>
            <person name="Laudie M."/>
            <person name="Berger-Llauro C."/>
            <person name="Purnelle B."/>
            <person name="Masuy D."/>
            <person name="de Haan M."/>
            <person name="Maarse A.C."/>
            <person name="Alcaraz J.-P."/>
            <person name="Cottet A."/>
            <person name="Casacuberta E."/>
            <person name="Monfort A."/>
            <person name="Argiriou A."/>
            <person name="Flores M."/>
            <person name="Liguori R."/>
            <person name="Vitale D."/>
            <person name="Mannhaupt G."/>
            <person name="Haase D."/>
            <person name="Schoof H."/>
            <person name="Rudd S."/>
            <person name="Zaccaria P."/>
            <person name="Mewes H.-W."/>
            <person name="Mayer K.F.X."/>
            <person name="Kaul S."/>
            <person name="Town C.D."/>
            <person name="Koo H.L."/>
            <person name="Tallon L.J."/>
            <person name="Jenkins J."/>
            <person name="Rooney T."/>
            <person name="Rizzo M."/>
            <person name="Walts A."/>
            <person name="Utterback T."/>
            <person name="Fujii C.Y."/>
            <person name="Shea T.P."/>
            <person name="Creasy T.H."/>
            <person name="Haas B."/>
            <person name="Maiti R."/>
            <person name="Wu D."/>
            <person name="Peterson J."/>
            <person name="Van Aken S."/>
            <person name="Pai G."/>
            <person name="Militscher J."/>
            <person name="Sellers P."/>
            <person name="Gill J.E."/>
            <person name="Feldblyum T.V."/>
            <person name="Preuss D."/>
            <person name="Lin X."/>
            <person name="Nierman W.C."/>
            <person name="Salzberg S.L."/>
            <person name="White O."/>
            <person name="Venter J.C."/>
            <person name="Fraser C.M."/>
            <person name="Kaneko T."/>
            <person name="Nakamura Y."/>
            <person name="Sato S."/>
            <person name="Kato T."/>
            <person name="Asamizu E."/>
            <person name="Sasamoto S."/>
            <person name="Kimura T."/>
            <person name="Idesawa K."/>
            <person name="Kawashima K."/>
            <person name="Kishida Y."/>
            <person name="Kiyokawa C."/>
            <person name="Kohara M."/>
            <person name="Matsumoto M."/>
            <person name="Matsuno A."/>
            <person name="Muraki A."/>
            <person name="Nakayama S."/>
            <person name="Nakazaki N."/>
            <person name="Shinpo S."/>
            <person name="Takeuchi C."/>
            <person name="Wada T."/>
            <person name="Watanabe A."/>
            <person name="Yamada M."/>
            <person name="Yasuda M."/>
            <person name="Tabata S."/>
        </authorList>
    </citation>
    <scope>NUCLEOTIDE SEQUENCE [LARGE SCALE GENOMIC DNA]</scope>
    <source>
        <strain>cv. Columbia</strain>
    </source>
</reference>
<reference key="3">
    <citation type="journal article" date="2017" name="Plant J.">
        <title>Araport11: a complete reannotation of the Arabidopsis thaliana reference genome.</title>
        <authorList>
            <person name="Cheng C.Y."/>
            <person name="Krishnakumar V."/>
            <person name="Chan A.P."/>
            <person name="Thibaud-Nissen F."/>
            <person name="Schobel S."/>
            <person name="Town C.D."/>
        </authorList>
    </citation>
    <scope>GENOME REANNOTATION</scope>
    <source>
        <strain>cv. Columbia</strain>
    </source>
</reference>
<reference key="4">
    <citation type="submission" date="2006-10" db="EMBL/GenBank/DDBJ databases">
        <title>Arabidopsis ORF Clone.</title>
        <authorList>
            <person name="Bautista V.R."/>
            <person name="Kim C.J."/>
            <person name="Chen H."/>
            <person name="Quinitio C."/>
            <person name="Ecker J.R."/>
        </authorList>
    </citation>
    <scope>NUCLEOTIDE SEQUENCE [LARGE SCALE MRNA]</scope>
    <source>
        <strain>cv. Columbia</strain>
    </source>
</reference>
<reference key="5">
    <citation type="journal article" date="2005" name="Proc. Natl. Acad. Sci. U.S.A.">
        <title>Cell and plastid division are coordinated through the prereplication factor AtCDT1.</title>
        <authorList>
            <person name="Raynaud C."/>
            <person name="Perennes C."/>
            <person name="Reuzeau C."/>
            <person name="Catrice O."/>
            <person name="Brown S."/>
            <person name="Bergounioux C."/>
        </authorList>
    </citation>
    <scope>FUNCTION</scope>
    <source>
        <strain>cv. Wassilewskija</strain>
    </source>
</reference>
<reference key="6">
    <citation type="journal article" date="2008" name="EMBO J.">
        <title>ABAP1 is a novel plant Armadillo BTB protein involved in DNA replication and transcription.</title>
        <authorList>
            <person name="Masuda H.P."/>
            <person name="Cabral L.M."/>
            <person name="De Veylder L."/>
            <person name="Tanurdzic M."/>
            <person name="de Almeida Engler J."/>
            <person name="Geelen D."/>
            <person name="Inze D."/>
            <person name="Martienssen R.A."/>
            <person name="Ferreira P.C."/>
            <person name="Hemerly A.S."/>
        </authorList>
    </citation>
    <scope>INDUCTION BY ABAP1</scope>
</reference>
<proteinExistence type="evidence at protein level"/>
<accession>Q9M1S9</accession>
<protein>
    <recommendedName>
        <fullName>CDT1-like protein b</fullName>
        <shortName>AtCDT1b</shortName>
    </recommendedName>
</protein>
<feature type="chain" id="PRO_0000406939" description="CDT1-like protein b">
    <location>
        <begin position="1"/>
        <end position="486"/>
    </location>
</feature>
<feature type="region of interest" description="Disordered" evidence="1">
    <location>
        <begin position="273"/>
        <end position="294"/>
    </location>
</feature>
<feature type="region of interest" description="Disordered" evidence="1">
    <location>
        <begin position="348"/>
        <end position="371"/>
    </location>
</feature>
<feature type="compositionally biased region" description="Polar residues" evidence="1">
    <location>
        <begin position="281"/>
        <end position="294"/>
    </location>
</feature>
<feature type="compositionally biased region" description="Basic and acidic residues" evidence="1">
    <location>
        <begin position="348"/>
        <end position="363"/>
    </location>
</feature>